<sequence length="78" mass="8697">MSATTACWPAFTVLGEARGDQVDWSRLYRDTGLVKMSRKPRASSPFSNNHPSTPKRFPRQPRREKGPVKEVPGTKGSP</sequence>
<evidence type="ECO:0000255" key="1"/>
<evidence type="ECO:0000256" key="2">
    <source>
        <dbReference type="SAM" id="MobiDB-lite"/>
    </source>
</evidence>
<evidence type="ECO:0000269" key="3">
    <source>
    </source>
</evidence>
<evidence type="ECO:0000269" key="4">
    <source>
    </source>
</evidence>
<evidence type="ECO:0000303" key="5">
    <source>
    </source>
</evidence>
<evidence type="ECO:0000305" key="6"/>
<evidence type="ECO:0000312" key="7">
    <source>
        <dbReference type="HGNC" id="HGNC:24294"/>
    </source>
</evidence>
<dbReference type="EMBL" id="AF195880">
    <property type="status" value="NOT_ANNOTATED_CDS"/>
    <property type="molecule type" value="mRNA"/>
</dbReference>
<dbReference type="EMBL" id="AF268419">
    <property type="status" value="NOT_ANNOTATED_CDS"/>
    <property type="molecule type" value="mRNA"/>
</dbReference>
<dbReference type="EMBL" id="AC244102">
    <property type="status" value="NOT_ANNOTATED_CDS"/>
    <property type="molecule type" value="Genomic_DNA"/>
</dbReference>
<dbReference type="EMBL" id="AF002997">
    <property type="status" value="NOT_ANNOTATED_CDS"/>
    <property type="molecule type" value="Genomic_DNA"/>
</dbReference>
<dbReference type="EMBL" id="CH471169">
    <property type="protein sequence ID" value="EAW99433.1"/>
    <property type="molecule type" value="Genomic_DNA"/>
</dbReference>
<dbReference type="EMBL" id="CH471169">
    <property type="protein sequence ID" value="EAW99435.1"/>
    <property type="molecule type" value="Genomic_DNA"/>
</dbReference>
<dbReference type="EMBL" id="BC059947">
    <property type="protein sequence ID" value="AAH59947.1"/>
    <property type="molecule type" value="mRNA"/>
</dbReference>
<dbReference type="CCDS" id="CCDS76047.1">
    <molecule id="Q6PB30-1"/>
</dbReference>
<dbReference type="RefSeq" id="NP_001096046.2">
    <molecule id="Q6PB30-1"/>
    <property type="nucleotide sequence ID" value="NM_001102576.3"/>
</dbReference>
<dbReference type="RefSeq" id="NP_705611.2">
    <molecule id="Q6PB30-1"/>
    <property type="nucleotide sequence ID" value="NM_153478.3"/>
</dbReference>
<dbReference type="BioGRID" id="127689">
    <property type="interactions" value="12"/>
</dbReference>
<dbReference type="FunCoup" id="Q6PB30">
    <property type="interactions" value="57"/>
</dbReference>
<dbReference type="IntAct" id="Q6PB30">
    <property type="interactions" value="70"/>
</dbReference>
<dbReference type="MINT" id="Q6PB30"/>
<dbReference type="STRING" id="9606.ENSP00000359310"/>
<dbReference type="iPTMnet" id="Q6PB30"/>
<dbReference type="PhosphoSitePlus" id="Q6PB30"/>
<dbReference type="BioMuta" id="CSAG1"/>
<dbReference type="MassIVE" id="Q6PB30"/>
<dbReference type="PaxDb" id="9606-ENSP00000359310"/>
<dbReference type="PeptideAtlas" id="Q6PB30"/>
<dbReference type="Antibodypedia" id="71999">
    <property type="antibodies" value="44 antibodies from 12 providers"/>
</dbReference>
<dbReference type="DNASU" id="158511"/>
<dbReference type="Ensembl" id="ENST00000370287.7">
    <molecule id="Q6PB30-1"/>
    <property type="protein sequence ID" value="ENSP00000359310.3"/>
    <property type="gene ID" value="ENSG00000198930.13"/>
</dbReference>
<dbReference type="Ensembl" id="ENST00000370291.6">
    <molecule id="Q6PB30-2"/>
    <property type="protein sequence ID" value="ENSP00000359314.2"/>
    <property type="gene ID" value="ENSG00000198930.13"/>
</dbReference>
<dbReference type="Ensembl" id="ENST00000452779.3">
    <molecule id="Q6PB30-1"/>
    <property type="protein sequence ID" value="ENSP00000396520.2"/>
    <property type="gene ID" value="ENSG00000198930.13"/>
</dbReference>
<dbReference type="Ensembl" id="ENST00000709988.1">
    <molecule id="Q6PB30-2"/>
    <property type="protein sequence ID" value="ENSP00000517972.1"/>
    <property type="gene ID" value="ENSG00000292188.1"/>
</dbReference>
<dbReference type="GeneID" id="158511"/>
<dbReference type="KEGG" id="hsa:158511"/>
<dbReference type="MANE-Select" id="ENST00000452779.3">
    <property type="protein sequence ID" value="ENSP00000396520.2"/>
    <property type="RefSeq nucleotide sequence ID" value="NM_001102576.3"/>
    <property type="RefSeq protein sequence ID" value="NP_001096046.2"/>
</dbReference>
<dbReference type="UCSC" id="uc033fah.1">
    <property type="organism name" value="human"/>
</dbReference>
<dbReference type="UCSC" id="uc065brz.1">
    <molecule id="Q6PB30-1"/>
    <property type="organism name" value="human"/>
</dbReference>
<dbReference type="AGR" id="HGNC:24294"/>
<dbReference type="CTD" id="158511"/>
<dbReference type="DisGeNET" id="158511"/>
<dbReference type="GeneCards" id="CSAG1"/>
<dbReference type="HGNC" id="HGNC:24294">
    <property type="gene designation" value="CSAG1"/>
</dbReference>
<dbReference type="HPA" id="ENSG00000198930">
    <property type="expression patterns" value="Group enriched (brain, testis)"/>
</dbReference>
<dbReference type="MIM" id="300944">
    <property type="type" value="gene"/>
</dbReference>
<dbReference type="neXtProt" id="NX_Q6PB30"/>
<dbReference type="OpenTargets" id="ENSG00000198930"/>
<dbReference type="PharmGKB" id="PA134962241"/>
<dbReference type="VEuPathDB" id="HostDB:ENSG00000198930"/>
<dbReference type="eggNOG" id="ENOG502TFI5">
    <property type="taxonomic scope" value="Eukaryota"/>
</dbReference>
<dbReference type="GeneTree" id="ENSGT00390000012766"/>
<dbReference type="InParanoid" id="Q6PB30"/>
<dbReference type="OMA" id="GGDQVDW"/>
<dbReference type="PAN-GO" id="Q6PB30">
    <property type="GO annotations" value="0 GO annotations based on evolutionary models"/>
</dbReference>
<dbReference type="PhylomeDB" id="Q6PB30"/>
<dbReference type="TreeFam" id="TF340411"/>
<dbReference type="PathwayCommons" id="Q6PB30"/>
<dbReference type="SignaLink" id="Q6PB30"/>
<dbReference type="BioGRID-ORCS" id="158511">
    <property type="hits" value="13 hits in 689 CRISPR screens"/>
</dbReference>
<dbReference type="GenomeRNAi" id="158511"/>
<dbReference type="Pharos" id="Q6PB30">
    <property type="development level" value="Tbio"/>
</dbReference>
<dbReference type="PRO" id="PR:Q6PB30"/>
<dbReference type="Proteomes" id="UP000005640">
    <property type="component" value="Chromosome X"/>
</dbReference>
<dbReference type="RNAct" id="Q6PB30">
    <property type="molecule type" value="protein"/>
</dbReference>
<dbReference type="Bgee" id="ENSG00000198930">
    <property type="expression patterns" value="Expressed in male germ line stem cell (sensu Vertebrata) in testis and 51 other cell types or tissues"/>
</dbReference>
<dbReference type="ExpressionAtlas" id="Q6PB30">
    <property type="expression patterns" value="baseline and differential"/>
</dbReference>
<dbReference type="GO" id="GO:0005813">
    <property type="term" value="C:centrosome"/>
    <property type="evidence" value="ECO:0000314"/>
    <property type="project" value="UniProtKB"/>
</dbReference>
<dbReference type="GO" id="GO:0005737">
    <property type="term" value="C:cytoplasm"/>
    <property type="evidence" value="ECO:0007669"/>
    <property type="project" value="UniProtKB-KW"/>
</dbReference>
<dbReference type="GO" id="GO:0000922">
    <property type="term" value="C:spindle pole"/>
    <property type="evidence" value="ECO:0000314"/>
    <property type="project" value="UniProtKB"/>
</dbReference>
<dbReference type="GO" id="GO:0007098">
    <property type="term" value="P:centrosome cycle"/>
    <property type="evidence" value="ECO:0000315"/>
    <property type="project" value="UniProtKB"/>
</dbReference>
<accession>Q6PB30</accession>
<accession>A0A024RC18</accession>
<accession>A6NE22</accession>
<organism>
    <name type="scientific">Homo sapiens</name>
    <name type="common">Human</name>
    <dbReference type="NCBI Taxonomy" id="9606"/>
    <lineage>
        <taxon>Eukaryota</taxon>
        <taxon>Metazoa</taxon>
        <taxon>Chordata</taxon>
        <taxon>Craniata</taxon>
        <taxon>Vertebrata</taxon>
        <taxon>Euteleostomi</taxon>
        <taxon>Mammalia</taxon>
        <taxon>Eutheria</taxon>
        <taxon>Euarchontoglires</taxon>
        <taxon>Primates</taxon>
        <taxon>Haplorrhini</taxon>
        <taxon>Catarrhini</taxon>
        <taxon>Hominidae</taxon>
        <taxon>Homo</taxon>
    </lineage>
</organism>
<protein>
    <recommendedName>
        <fullName evidence="6">Chondrosarcoma-associated gene 1 protein</fullName>
    </recommendedName>
    <alternativeName>
        <fullName>Cancer/testis antigen 24.1</fullName>
        <shortName>CT24.1</shortName>
    </alternativeName>
    <alternativeName>
        <fullName evidence="5">Cancer/testis antigen CSAGE</fullName>
    </alternativeName>
</protein>
<name>CSAG1_HUMAN</name>
<reference key="1">
    <citation type="journal article" date="2002" name="Gene">
        <title>Cancer/testis antigen CSAGE is concurrently expressed with MAGE in chondrosarcoma.</title>
        <authorList>
            <person name="Lin C."/>
            <person name="Mak S."/>
            <person name="Meitner P.A."/>
            <person name="Wolf J.M."/>
            <person name="Bluman E.M."/>
            <person name="Block J.A."/>
            <person name="Terek R.M."/>
        </authorList>
    </citation>
    <scope>NUCLEOTIDE SEQUENCE [MRNA] (ISOFORMS 1 AND 2)</scope>
    <scope>TISSUE SPECIFICITY</scope>
</reference>
<reference key="2">
    <citation type="journal article" date="2005" name="Nature">
        <title>The DNA sequence of the human X chromosome.</title>
        <authorList>
            <person name="Ross M.T."/>
            <person name="Grafham D.V."/>
            <person name="Coffey A.J."/>
            <person name="Scherer S."/>
            <person name="McLay K."/>
            <person name="Muzny D."/>
            <person name="Platzer M."/>
            <person name="Howell G.R."/>
            <person name="Burrows C."/>
            <person name="Bird C.P."/>
            <person name="Frankish A."/>
            <person name="Lovell F.L."/>
            <person name="Howe K.L."/>
            <person name="Ashurst J.L."/>
            <person name="Fulton R.S."/>
            <person name="Sudbrak R."/>
            <person name="Wen G."/>
            <person name="Jones M.C."/>
            <person name="Hurles M.E."/>
            <person name="Andrews T.D."/>
            <person name="Scott C.E."/>
            <person name="Searle S."/>
            <person name="Ramser J."/>
            <person name="Whittaker A."/>
            <person name="Deadman R."/>
            <person name="Carter N.P."/>
            <person name="Hunt S.E."/>
            <person name="Chen R."/>
            <person name="Cree A."/>
            <person name="Gunaratne P."/>
            <person name="Havlak P."/>
            <person name="Hodgson A."/>
            <person name="Metzker M.L."/>
            <person name="Richards S."/>
            <person name="Scott G."/>
            <person name="Steffen D."/>
            <person name="Sodergren E."/>
            <person name="Wheeler D.A."/>
            <person name="Worley K.C."/>
            <person name="Ainscough R."/>
            <person name="Ambrose K.D."/>
            <person name="Ansari-Lari M.A."/>
            <person name="Aradhya S."/>
            <person name="Ashwell R.I."/>
            <person name="Babbage A.K."/>
            <person name="Bagguley C.L."/>
            <person name="Ballabio A."/>
            <person name="Banerjee R."/>
            <person name="Barker G.E."/>
            <person name="Barlow K.F."/>
            <person name="Barrett I.P."/>
            <person name="Bates K.N."/>
            <person name="Beare D.M."/>
            <person name="Beasley H."/>
            <person name="Beasley O."/>
            <person name="Beck A."/>
            <person name="Bethel G."/>
            <person name="Blechschmidt K."/>
            <person name="Brady N."/>
            <person name="Bray-Allen S."/>
            <person name="Bridgeman A.M."/>
            <person name="Brown A.J."/>
            <person name="Brown M.J."/>
            <person name="Bonnin D."/>
            <person name="Bruford E.A."/>
            <person name="Buhay C."/>
            <person name="Burch P."/>
            <person name="Burford D."/>
            <person name="Burgess J."/>
            <person name="Burrill W."/>
            <person name="Burton J."/>
            <person name="Bye J.M."/>
            <person name="Carder C."/>
            <person name="Carrel L."/>
            <person name="Chako J."/>
            <person name="Chapman J.C."/>
            <person name="Chavez D."/>
            <person name="Chen E."/>
            <person name="Chen G."/>
            <person name="Chen Y."/>
            <person name="Chen Z."/>
            <person name="Chinault C."/>
            <person name="Ciccodicola A."/>
            <person name="Clark S.Y."/>
            <person name="Clarke G."/>
            <person name="Clee C.M."/>
            <person name="Clegg S."/>
            <person name="Clerc-Blankenburg K."/>
            <person name="Clifford K."/>
            <person name="Cobley V."/>
            <person name="Cole C.G."/>
            <person name="Conquer J.S."/>
            <person name="Corby N."/>
            <person name="Connor R.E."/>
            <person name="David R."/>
            <person name="Davies J."/>
            <person name="Davis C."/>
            <person name="Davis J."/>
            <person name="Delgado O."/>
            <person name="Deshazo D."/>
            <person name="Dhami P."/>
            <person name="Ding Y."/>
            <person name="Dinh H."/>
            <person name="Dodsworth S."/>
            <person name="Draper H."/>
            <person name="Dugan-Rocha S."/>
            <person name="Dunham A."/>
            <person name="Dunn M."/>
            <person name="Durbin K.J."/>
            <person name="Dutta I."/>
            <person name="Eades T."/>
            <person name="Ellwood M."/>
            <person name="Emery-Cohen A."/>
            <person name="Errington H."/>
            <person name="Evans K.L."/>
            <person name="Faulkner L."/>
            <person name="Francis F."/>
            <person name="Frankland J."/>
            <person name="Fraser A.E."/>
            <person name="Galgoczy P."/>
            <person name="Gilbert J."/>
            <person name="Gill R."/>
            <person name="Gloeckner G."/>
            <person name="Gregory S.G."/>
            <person name="Gribble S."/>
            <person name="Griffiths C."/>
            <person name="Grocock R."/>
            <person name="Gu Y."/>
            <person name="Gwilliam R."/>
            <person name="Hamilton C."/>
            <person name="Hart E.A."/>
            <person name="Hawes A."/>
            <person name="Heath P.D."/>
            <person name="Heitmann K."/>
            <person name="Hennig S."/>
            <person name="Hernandez J."/>
            <person name="Hinzmann B."/>
            <person name="Ho S."/>
            <person name="Hoffs M."/>
            <person name="Howden P.J."/>
            <person name="Huckle E.J."/>
            <person name="Hume J."/>
            <person name="Hunt P.J."/>
            <person name="Hunt A.R."/>
            <person name="Isherwood J."/>
            <person name="Jacob L."/>
            <person name="Johnson D."/>
            <person name="Jones S."/>
            <person name="de Jong P.J."/>
            <person name="Joseph S.S."/>
            <person name="Keenan S."/>
            <person name="Kelly S."/>
            <person name="Kershaw J.K."/>
            <person name="Khan Z."/>
            <person name="Kioschis P."/>
            <person name="Klages S."/>
            <person name="Knights A.J."/>
            <person name="Kosiura A."/>
            <person name="Kovar-Smith C."/>
            <person name="Laird G.K."/>
            <person name="Langford C."/>
            <person name="Lawlor S."/>
            <person name="Leversha M."/>
            <person name="Lewis L."/>
            <person name="Liu W."/>
            <person name="Lloyd C."/>
            <person name="Lloyd D.M."/>
            <person name="Loulseged H."/>
            <person name="Loveland J.E."/>
            <person name="Lovell J.D."/>
            <person name="Lozado R."/>
            <person name="Lu J."/>
            <person name="Lyne R."/>
            <person name="Ma J."/>
            <person name="Maheshwari M."/>
            <person name="Matthews L.H."/>
            <person name="McDowall J."/>
            <person name="McLaren S."/>
            <person name="McMurray A."/>
            <person name="Meidl P."/>
            <person name="Meitinger T."/>
            <person name="Milne S."/>
            <person name="Miner G."/>
            <person name="Mistry S.L."/>
            <person name="Morgan M."/>
            <person name="Morris S."/>
            <person name="Mueller I."/>
            <person name="Mullikin J.C."/>
            <person name="Nguyen N."/>
            <person name="Nordsiek G."/>
            <person name="Nyakatura G."/>
            <person name="O'dell C.N."/>
            <person name="Okwuonu G."/>
            <person name="Palmer S."/>
            <person name="Pandian R."/>
            <person name="Parker D."/>
            <person name="Parrish J."/>
            <person name="Pasternak S."/>
            <person name="Patel D."/>
            <person name="Pearce A.V."/>
            <person name="Pearson D.M."/>
            <person name="Pelan S.E."/>
            <person name="Perez L."/>
            <person name="Porter K.M."/>
            <person name="Ramsey Y."/>
            <person name="Reichwald K."/>
            <person name="Rhodes S."/>
            <person name="Ridler K.A."/>
            <person name="Schlessinger D."/>
            <person name="Schueler M.G."/>
            <person name="Sehra H.K."/>
            <person name="Shaw-Smith C."/>
            <person name="Shen H."/>
            <person name="Sheridan E.M."/>
            <person name="Shownkeen R."/>
            <person name="Skuce C.D."/>
            <person name="Smith M.L."/>
            <person name="Sotheran E.C."/>
            <person name="Steingruber H.E."/>
            <person name="Steward C.A."/>
            <person name="Storey R."/>
            <person name="Swann R.M."/>
            <person name="Swarbreck D."/>
            <person name="Tabor P.E."/>
            <person name="Taudien S."/>
            <person name="Taylor T."/>
            <person name="Teague B."/>
            <person name="Thomas K."/>
            <person name="Thorpe A."/>
            <person name="Timms K."/>
            <person name="Tracey A."/>
            <person name="Trevanion S."/>
            <person name="Tromans A.C."/>
            <person name="d'Urso M."/>
            <person name="Verduzco D."/>
            <person name="Villasana D."/>
            <person name="Waldron L."/>
            <person name="Wall M."/>
            <person name="Wang Q."/>
            <person name="Warren J."/>
            <person name="Warry G.L."/>
            <person name="Wei X."/>
            <person name="West A."/>
            <person name="Whitehead S.L."/>
            <person name="Whiteley M.N."/>
            <person name="Wilkinson J.E."/>
            <person name="Willey D.L."/>
            <person name="Williams G."/>
            <person name="Williams L."/>
            <person name="Williamson A."/>
            <person name="Williamson H."/>
            <person name="Wilming L."/>
            <person name="Woodmansey R.L."/>
            <person name="Wray P.W."/>
            <person name="Yen J."/>
            <person name="Zhang J."/>
            <person name="Zhou J."/>
            <person name="Zoghbi H."/>
            <person name="Zorilla S."/>
            <person name="Buck D."/>
            <person name="Reinhardt R."/>
            <person name="Poustka A."/>
            <person name="Rosenthal A."/>
            <person name="Lehrach H."/>
            <person name="Meindl A."/>
            <person name="Minx P.J."/>
            <person name="Hillier L.W."/>
            <person name="Willard H.F."/>
            <person name="Wilson R.K."/>
            <person name="Waterston R.H."/>
            <person name="Rice C.M."/>
            <person name="Vaudin M."/>
            <person name="Coulson A."/>
            <person name="Nelson D.L."/>
            <person name="Weinstock G."/>
            <person name="Sulston J.E."/>
            <person name="Durbin R.M."/>
            <person name="Hubbard T."/>
            <person name="Gibbs R.A."/>
            <person name="Beck S."/>
            <person name="Rogers J."/>
            <person name="Bentley D.R."/>
        </authorList>
    </citation>
    <scope>NUCLEOTIDE SEQUENCE [LARGE SCALE GENOMIC DNA]</scope>
</reference>
<reference key="3">
    <citation type="submission" date="2005-07" db="EMBL/GenBank/DDBJ databases">
        <authorList>
            <person name="Mural R.J."/>
            <person name="Istrail S."/>
            <person name="Sutton G.G."/>
            <person name="Florea L."/>
            <person name="Halpern A.L."/>
            <person name="Mobarry C.M."/>
            <person name="Lippert R."/>
            <person name="Walenz B."/>
            <person name="Shatkay H."/>
            <person name="Dew I."/>
            <person name="Miller J.R."/>
            <person name="Flanigan M.J."/>
            <person name="Edwards N.J."/>
            <person name="Bolanos R."/>
            <person name="Fasulo D."/>
            <person name="Halldorsson B.V."/>
            <person name="Hannenhalli S."/>
            <person name="Turner R."/>
            <person name="Yooseph S."/>
            <person name="Lu F."/>
            <person name="Nusskern D.R."/>
            <person name="Shue B.C."/>
            <person name="Zheng X.H."/>
            <person name="Zhong F."/>
            <person name="Delcher A.L."/>
            <person name="Huson D.H."/>
            <person name="Kravitz S.A."/>
            <person name="Mouchard L."/>
            <person name="Reinert K."/>
            <person name="Remington K.A."/>
            <person name="Clark A.G."/>
            <person name="Waterman M.S."/>
            <person name="Eichler E.E."/>
            <person name="Adams M.D."/>
            <person name="Hunkapiller M.W."/>
            <person name="Myers E.W."/>
            <person name="Venter J.C."/>
        </authorList>
    </citation>
    <scope>NUCLEOTIDE SEQUENCE [LARGE SCALE GENOMIC DNA]</scope>
</reference>
<reference key="4">
    <citation type="journal article" date="2004" name="Genome Res.">
        <title>The status, quality, and expansion of the NIH full-length cDNA project: the Mammalian Gene Collection (MGC).</title>
        <authorList>
            <consortium name="The MGC Project Team"/>
        </authorList>
    </citation>
    <scope>NUCLEOTIDE SEQUENCE [LARGE SCALE MRNA] (ISOFORM 1)</scope>
    <source>
        <tissue>Mammary gland</tissue>
    </source>
</reference>
<reference key="5">
    <citation type="journal article" date="2020" name="J. Cell Sci.">
        <title>CSAG1 maintains the integrity of the mitotic centrosome in cells with defective p53.</title>
        <authorList>
            <person name="Sapkota H."/>
            <person name="Wren J.D."/>
            <person name="Gorbsky G.J."/>
        </authorList>
    </citation>
    <scope>FUNCTION</scope>
    <scope>SUBCELLULAR LOCATION</scope>
</reference>
<feature type="signal peptide" evidence="1">
    <location>
        <begin position="1"/>
        <end position="19"/>
    </location>
</feature>
<feature type="chain" id="PRO_0000291848" description="Chondrosarcoma-associated gene 1 protein">
    <location>
        <begin position="20"/>
        <end position="78"/>
    </location>
</feature>
<feature type="region of interest" description="Disordered" evidence="2">
    <location>
        <begin position="35"/>
        <end position="78"/>
    </location>
</feature>
<feature type="splice variant" id="VSP_026267" description="In isoform 2." evidence="5">
    <original>FPRQPRREKGPVKEVPGTKGSP</original>
    <variation>RGRGKHPLIPGPEALSK</variation>
    <location>
        <begin position="57"/>
        <end position="78"/>
    </location>
</feature>
<feature type="sequence variant" id="VAR_032868" description="In dbSNP:rs1894359.">
    <original>Y</original>
    <variation>F</variation>
    <location>
        <position position="28"/>
    </location>
</feature>
<feature type="sequence variant" id="VAR_047336" description="In dbSNP:rs2515848.">
    <original>R</original>
    <variation>K</variation>
    <location>
        <position position="62"/>
    </location>
</feature>
<feature type="sequence conflict" description="In Ref. 1; AF195880." evidence="6" ref="1">
    <original>Y</original>
    <variation>C</variation>
    <location>
        <position position="28"/>
    </location>
</feature>
<proteinExistence type="evidence at transcript level"/>
<gene>
    <name evidence="7" type="primary">CSAG1</name>
    <name evidence="5" type="synonym">CSAGE</name>
</gene>
<keyword id="KW-0025">Alternative splicing</keyword>
<keyword id="KW-0963">Cytoplasm</keyword>
<keyword id="KW-0206">Cytoskeleton</keyword>
<keyword id="KW-1185">Reference proteome</keyword>
<keyword id="KW-0732">Signal</keyword>
<comment type="function">
    <text evidence="4">May play an important role in maintaining centrosome integrity during mitosis.</text>
</comment>
<comment type="subcellular location">
    <subcellularLocation>
        <location evidence="4">Cytoplasm</location>
        <location evidence="4">Cytoskeleton</location>
        <location evidence="4">Microtubule organizing center</location>
        <location evidence="4">Centrosome</location>
    </subcellularLocation>
    <subcellularLocation>
        <location evidence="4">Cytoplasm</location>
        <location evidence="4">Cytoskeleton</location>
        <location evidence="4">Spindle pole</location>
    </subcellularLocation>
    <text evidence="4">Localizes at spindle poles and/or centrosomes in both mitotic and interphase cells (PubMed:32295846). Spindle pole localization is more pronounced during mitosis (PubMed:32295846). Centrosomal localization culminates at prophase (PubMed:32295846).</text>
</comment>
<comment type="alternative products">
    <event type="alternative splicing"/>
    <isoform>
        <id>Q6PB30-1</id>
        <name>1</name>
        <name>CSAG1a</name>
        <sequence type="displayed"/>
    </isoform>
    <isoform>
        <id>Q6PB30-2</id>
        <name>2</name>
        <name>CSAG1c</name>
        <sequence type="described" ref="VSP_026267"/>
    </isoform>
</comment>
<comment type="tissue specificity">
    <text evidence="3">Expressed in chondrosarcoma, melanoma, cartilage and testis, but not in other normal tissues.</text>
</comment>